<proteinExistence type="inferred from homology"/>
<sequence length="611" mass="65071">MSKIIGIDLGTTNSAVAVLEGTESKIIANPEGNRTTPSVVSFKNGEIIVGDAAKRQAVTNPDTVISIKSKMGTSEKVAANGKEYTPQEISAMILQYLKGYAEDYLGEKVTKAVITVPAYFNDAQRQATKDAGKIAGLEVERIVNEPTAAALAYGLDKTDKEEKILVFDLGGGTFDVSILELGDGVFDVLATAGDNKLGGDDFDQKIIDFLVAEFKKENGIDLSQDKMALQRLKDAAEKAKKDLSGVTQTQISLPFITAGAAGPLHLEMSLSRAKFDDLTRDLVERTKVPVRQALSDAGLSLSEIDEVILVGGSTRIPAVVEAVKAETGKEPNKSVNPDEVVAMGAAIQGGVITGDVKDVVLLDVTPLSLGIETMGGVFTKLIDRNTTIPTSKSQVFSTAADNQPAVDIHVLQGERPMAADNKTLGRFQLTDIPAAPRGIPQIEVTFDIDKNGIVSVKAKDLGTQKEQHIVIKSNDGLSEEEIERMMKDAEANAEADAKRKEEVDLKNEVDQAIFATEKTIKETEGKGFDTERDAAQAALDELKKAQESGDLDDMKAKLEALNEKAQALAVKMYEQAAAAQQAQAQAGAEGAADTGSTNSGDDVVDGEFTEK</sequence>
<gene>
    <name evidence="1" type="primary">dnaK</name>
    <name type="ordered locus">SZO_15780</name>
</gene>
<feature type="chain" id="PRO_1000205198" description="Chaperone protein DnaK">
    <location>
        <begin position="1"/>
        <end position="611"/>
    </location>
</feature>
<feature type="region of interest" description="Disordered" evidence="2">
    <location>
        <begin position="575"/>
        <end position="611"/>
    </location>
</feature>
<feature type="compositionally biased region" description="Low complexity" evidence="2">
    <location>
        <begin position="575"/>
        <end position="592"/>
    </location>
</feature>
<feature type="compositionally biased region" description="Acidic residues" evidence="2">
    <location>
        <begin position="602"/>
        <end position="611"/>
    </location>
</feature>
<feature type="modified residue" description="Phosphothreonine; by autocatalysis" evidence="1">
    <location>
        <position position="173"/>
    </location>
</feature>
<evidence type="ECO:0000255" key="1">
    <source>
        <dbReference type="HAMAP-Rule" id="MF_00332"/>
    </source>
</evidence>
<evidence type="ECO:0000256" key="2">
    <source>
        <dbReference type="SAM" id="MobiDB-lite"/>
    </source>
</evidence>
<protein>
    <recommendedName>
        <fullName evidence="1">Chaperone protein DnaK</fullName>
    </recommendedName>
    <alternativeName>
        <fullName evidence="1">HSP70</fullName>
    </alternativeName>
    <alternativeName>
        <fullName evidence="1">Heat shock 70 kDa protein</fullName>
    </alternativeName>
    <alternativeName>
        <fullName evidence="1">Heat shock protein 70</fullName>
    </alternativeName>
</protein>
<comment type="function">
    <text evidence="1">Acts as a chaperone.</text>
</comment>
<comment type="induction">
    <text evidence="1">By stress conditions e.g. heat shock.</text>
</comment>
<comment type="similarity">
    <text evidence="1">Belongs to the heat shock protein 70 family.</text>
</comment>
<name>DNAK_STRS7</name>
<accession>C0ME86</accession>
<reference key="1">
    <citation type="journal article" date="2009" name="PLoS Pathog.">
        <title>Genomic evidence for the evolution of Streptococcus equi: host restriction, increased virulence, and genetic exchange with human pathogens.</title>
        <authorList>
            <person name="Holden M.T.G."/>
            <person name="Heather Z."/>
            <person name="Paillot R."/>
            <person name="Steward K.F."/>
            <person name="Webb K."/>
            <person name="Ainslie F."/>
            <person name="Jourdan T."/>
            <person name="Bason N.C."/>
            <person name="Holroyd N.E."/>
            <person name="Mungall K."/>
            <person name="Quail M.A."/>
            <person name="Sanders M."/>
            <person name="Simmonds M."/>
            <person name="Willey D."/>
            <person name="Brooks K."/>
            <person name="Aanensen D.M."/>
            <person name="Spratt B.G."/>
            <person name="Jolley K.A."/>
            <person name="Maiden M.C.J."/>
            <person name="Kehoe M."/>
            <person name="Chanter N."/>
            <person name="Bentley S.D."/>
            <person name="Robinson C."/>
            <person name="Maskell D.J."/>
            <person name="Parkhill J."/>
            <person name="Waller A.S."/>
        </authorList>
    </citation>
    <scope>NUCLEOTIDE SEQUENCE [LARGE SCALE GENOMIC DNA]</scope>
    <source>
        <strain>H70</strain>
    </source>
</reference>
<dbReference type="EMBL" id="FM204884">
    <property type="protein sequence ID" value="CAX00290.1"/>
    <property type="molecule type" value="Genomic_DNA"/>
</dbReference>
<dbReference type="SMR" id="C0ME86"/>
<dbReference type="KEGG" id="seq:SZO_15780"/>
<dbReference type="eggNOG" id="COG0443">
    <property type="taxonomic scope" value="Bacteria"/>
</dbReference>
<dbReference type="HOGENOM" id="CLU_005965_2_4_9"/>
<dbReference type="Proteomes" id="UP000001368">
    <property type="component" value="Chromosome"/>
</dbReference>
<dbReference type="GO" id="GO:0005524">
    <property type="term" value="F:ATP binding"/>
    <property type="evidence" value="ECO:0007669"/>
    <property type="project" value="UniProtKB-UniRule"/>
</dbReference>
<dbReference type="GO" id="GO:0140662">
    <property type="term" value="F:ATP-dependent protein folding chaperone"/>
    <property type="evidence" value="ECO:0007669"/>
    <property type="project" value="InterPro"/>
</dbReference>
<dbReference type="GO" id="GO:0051082">
    <property type="term" value="F:unfolded protein binding"/>
    <property type="evidence" value="ECO:0007669"/>
    <property type="project" value="InterPro"/>
</dbReference>
<dbReference type="CDD" id="cd10234">
    <property type="entry name" value="ASKHA_NBD_HSP70_DnaK-like"/>
    <property type="match status" value="1"/>
</dbReference>
<dbReference type="FunFam" id="2.60.34.10:FF:000014">
    <property type="entry name" value="Chaperone protein DnaK HSP70"/>
    <property type="match status" value="1"/>
</dbReference>
<dbReference type="FunFam" id="1.20.1270.10:FF:000001">
    <property type="entry name" value="Molecular chaperone DnaK"/>
    <property type="match status" value="1"/>
</dbReference>
<dbReference type="FunFam" id="3.30.420.40:FF:000071">
    <property type="entry name" value="Molecular chaperone DnaK"/>
    <property type="match status" value="1"/>
</dbReference>
<dbReference type="FunFam" id="3.90.640.10:FF:000003">
    <property type="entry name" value="Molecular chaperone DnaK"/>
    <property type="match status" value="1"/>
</dbReference>
<dbReference type="Gene3D" id="1.20.1270.10">
    <property type="match status" value="1"/>
</dbReference>
<dbReference type="Gene3D" id="3.30.420.40">
    <property type="match status" value="2"/>
</dbReference>
<dbReference type="Gene3D" id="3.90.640.10">
    <property type="entry name" value="Actin, Chain A, domain 4"/>
    <property type="match status" value="1"/>
</dbReference>
<dbReference type="Gene3D" id="2.60.34.10">
    <property type="entry name" value="Substrate Binding Domain Of DNAk, Chain A, domain 1"/>
    <property type="match status" value="1"/>
</dbReference>
<dbReference type="HAMAP" id="MF_00332">
    <property type="entry name" value="DnaK"/>
    <property type="match status" value="1"/>
</dbReference>
<dbReference type="InterPro" id="IPR043129">
    <property type="entry name" value="ATPase_NBD"/>
</dbReference>
<dbReference type="InterPro" id="IPR012725">
    <property type="entry name" value="Chaperone_DnaK"/>
</dbReference>
<dbReference type="InterPro" id="IPR018181">
    <property type="entry name" value="Heat_shock_70_CS"/>
</dbReference>
<dbReference type="InterPro" id="IPR029048">
    <property type="entry name" value="HSP70_C_sf"/>
</dbReference>
<dbReference type="InterPro" id="IPR029047">
    <property type="entry name" value="HSP70_peptide-bd_sf"/>
</dbReference>
<dbReference type="InterPro" id="IPR013126">
    <property type="entry name" value="Hsp_70_fam"/>
</dbReference>
<dbReference type="NCBIfam" id="NF001413">
    <property type="entry name" value="PRK00290.1"/>
    <property type="match status" value="1"/>
</dbReference>
<dbReference type="NCBIfam" id="TIGR02350">
    <property type="entry name" value="prok_dnaK"/>
    <property type="match status" value="1"/>
</dbReference>
<dbReference type="PANTHER" id="PTHR19375">
    <property type="entry name" value="HEAT SHOCK PROTEIN 70KDA"/>
    <property type="match status" value="1"/>
</dbReference>
<dbReference type="Pfam" id="PF00012">
    <property type="entry name" value="HSP70"/>
    <property type="match status" value="1"/>
</dbReference>
<dbReference type="PRINTS" id="PR00301">
    <property type="entry name" value="HEATSHOCK70"/>
</dbReference>
<dbReference type="SUPFAM" id="SSF53067">
    <property type="entry name" value="Actin-like ATPase domain"/>
    <property type="match status" value="2"/>
</dbReference>
<dbReference type="SUPFAM" id="SSF100934">
    <property type="entry name" value="Heat shock protein 70kD (HSP70), C-terminal subdomain"/>
    <property type="match status" value="1"/>
</dbReference>
<dbReference type="SUPFAM" id="SSF100920">
    <property type="entry name" value="Heat shock protein 70kD (HSP70), peptide-binding domain"/>
    <property type="match status" value="1"/>
</dbReference>
<dbReference type="PROSITE" id="PS00297">
    <property type="entry name" value="HSP70_1"/>
    <property type="match status" value="1"/>
</dbReference>
<dbReference type="PROSITE" id="PS00329">
    <property type="entry name" value="HSP70_2"/>
    <property type="match status" value="1"/>
</dbReference>
<dbReference type="PROSITE" id="PS01036">
    <property type="entry name" value="HSP70_3"/>
    <property type="match status" value="1"/>
</dbReference>
<keyword id="KW-0067">ATP-binding</keyword>
<keyword id="KW-0143">Chaperone</keyword>
<keyword id="KW-0547">Nucleotide-binding</keyword>
<keyword id="KW-0597">Phosphoprotein</keyword>
<keyword id="KW-0346">Stress response</keyword>
<organism>
    <name type="scientific">Streptococcus equi subsp. zooepidemicus (strain H70)</name>
    <dbReference type="NCBI Taxonomy" id="553483"/>
    <lineage>
        <taxon>Bacteria</taxon>
        <taxon>Bacillati</taxon>
        <taxon>Bacillota</taxon>
        <taxon>Bacilli</taxon>
        <taxon>Lactobacillales</taxon>
        <taxon>Streptococcaceae</taxon>
        <taxon>Streptococcus</taxon>
    </lineage>
</organism>